<reference key="1">
    <citation type="journal article" date="1989" name="AIDS Res. Hum. Retroviruses">
        <title>Genomic divergence of HIV-2 from Ghana.</title>
        <authorList>
            <person name="Hasegawa A."/>
            <person name="Tsujimoto H."/>
            <person name="Maki N."/>
            <person name="Ishikawa K."/>
            <person name="Miura T."/>
            <person name="Fukasawa M."/>
            <person name="Miki K."/>
            <person name="Hayami M."/>
        </authorList>
    </citation>
    <scope>NUCLEOTIDE SEQUENCE [GENOMIC DNA]</scope>
</reference>
<dbReference type="EMBL" id="M30895">
    <property type="protein sequence ID" value="AAA43936.1"/>
    <property type="molecule type" value="Genomic_DNA"/>
</dbReference>
<dbReference type="PIR" id="JS0331">
    <property type="entry name" value="ASLJGR"/>
</dbReference>
<dbReference type="SMR" id="P18046"/>
<dbReference type="Proteomes" id="UP000007424">
    <property type="component" value="Segment"/>
</dbReference>
<dbReference type="GO" id="GO:0043657">
    <property type="term" value="C:host cell"/>
    <property type="evidence" value="ECO:0007669"/>
    <property type="project" value="GOC"/>
</dbReference>
<dbReference type="GO" id="GO:0042025">
    <property type="term" value="C:host cell nucleus"/>
    <property type="evidence" value="ECO:0007669"/>
    <property type="project" value="UniProtKB-SubCell"/>
</dbReference>
<dbReference type="GO" id="GO:0044423">
    <property type="term" value="C:virion component"/>
    <property type="evidence" value="ECO:0007669"/>
    <property type="project" value="UniProtKB-KW"/>
</dbReference>
<dbReference type="GO" id="GO:0046718">
    <property type="term" value="P:symbiont entry into host cell"/>
    <property type="evidence" value="ECO:0007669"/>
    <property type="project" value="UniProtKB-KW"/>
</dbReference>
<dbReference type="GO" id="GO:0039592">
    <property type="term" value="P:symbiont-mediated arrest of host cell cycle during G2/M transition"/>
    <property type="evidence" value="ECO:0007669"/>
    <property type="project" value="UniProtKB-KW"/>
</dbReference>
<dbReference type="GO" id="GO:0075732">
    <property type="term" value="P:viral penetration into host nucleus"/>
    <property type="evidence" value="ECO:0007669"/>
    <property type="project" value="UniProtKB-KW"/>
</dbReference>
<dbReference type="Gene3D" id="6.10.210.10">
    <property type="match status" value="1"/>
</dbReference>
<dbReference type="Gene3D" id="1.20.5.90">
    <property type="entry name" value="VpR/VpX protein, C-terminal domain"/>
    <property type="match status" value="1"/>
</dbReference>
<dbReference type="InterPro" id="IPR000012">
    <property type="entry name" value="RetroV_VpR/X"/>
</dbReference>
<dbReference type="Pfam" id="PF00522">
    <property type="entry name" value="VPR"/>
    <property type="match status" value="1"/>
</dbReference>
<dbReference type="PRINTS" id="PR00444">
    <property type="entry name" value="HIVVPRVPX"/>
</dbReference>
<evidence type="ECO:0000250" key="1"/>
<evidence type="ECO:0000256" key="2">
    <source>
        <dbReference type="SAM" id="MobiDB-lite"/>
    </source>
</evidence>
<organismHost>
    <name type="scientific">Homo sapiens</name>
    <name type="common">Human</name>
    <dbReference type="NCBI Taxonomy" id="9606"/>
</organismHost>
<comment type="function">
    <text evidence="1">Stimulates gene expression driven by the HIV-2 LTR. Prevents infected cells from undergoing mitosis and proliferating, by inducing arrest or delay in the G2 phase of the cell cycle. Cell cycle arrest creates a favorable environment for maximizing viral expression and production (By similarity).</text>
</comment>
<comment type="subunit">
    <text evidence="1">Interacts with human UNG.</text>
</comment>
<comment type="subcellular location">
    <subcellularLocation>
        <location>Virion</location>
    </subcellularLocation>
    <subcellularLocation>
        <location evidence="1">Host nucleus</location>
    </subcellularLocation>
</comment>
<sequence>MTEAPTEFPPEDGTPRRELGGDWVIRILGEIKEEALKHFDPRLLIALGNYIHSRHGDTPEGARELIRILQRALFVHLRAGCNRSRISQTRRRTPFPAAPTPRGMY</sequence>
<accession>P18046</accession>
<keyword id="KW-0010">Activator</keyword>
<keyword id="KW-0014">AIDS</keyword>
<keyword id="KW-0131">Cell cycle</keyword>
<keyword id="KW-1079">Host G2/M cell cycle arrest by virus</keyword>
<keyword id="KW-1048">Host nucleus</keyword>
<keyword id="KW-0945">Host-virus interaction</keyword>
<keyword id="KW-1121">Modulation of host cell cycle by virus</keyword>
<keyword id="KW-0597">Phosphoprotein</keyword>
<keyword id="KW-0804">Transcription</keyword>
<keyword id="KW-0805">Transcription regulation</keyword>
<keyword id="KW-1163">Viral penetration into host nucleus</keyword>
<keyword id="KW-0946">Virion</keyword>
<keyword id="KW-1160">Virus entry into host cell</keyword>
<protein>
    <recommendedName>
        <fullName>Protein Vpr</fullName>
    </recommendedName>
    <alternativeName>
        <fullName>R ORF protein</fullName>
    </alternativeName>
    <alternativeName>
        <fullName>Viral protein R</fullName>
    </alternativeName>
</protein>
<proteinExistence type="inferred from homology"/>
<organism>
    <name type="scientific">Human immunodeficiency virus type 2 subtype A (isolate Ghana-1)</name>
    <name type="common">HIV-2</name>
    <dbReference type="NCBI Taxonomy" id="11717"/>
    <lineage>
        <taxon>Viruses</taxon>
        <taxon>Riboviria</taxon>
        <taxon>Pararnavirae</taxon>
        <taxon>Artverviricota</taxon>
        <taxon>Revtraviricetes</taxon>
        <taxon>Ortervirales</taxon>
        <taxon>Retroviridae</taxon>
        <taxon>Orthoretrovirinae</taxon>
        <taxon>Lentivirus</taxon>
        <taxon>Human immunodeficiency virus 2</taxon>
    </lineage>
</organism>
<gene>
    <name type="primary">vpr</name>
</gene>
<name>VPR_HV2G1</name>
<feature type="chain" id="PRO_0000085459" description="Protein Vpr">
    <location>
        <begin position="1"/>
        <end position="105"/>
    </location>
</feature>
<feature type="region of interest" description="Disordered" evidence="2">
    <location>
        <begin position="85"/>
        <end position="105"/>
    </location>
</feature>
<feature type="modified residue" description="Phosphoserine; by host" evidence="1">
    <location>
        <position position="84"/>
    </location>
</feature>